<feature type="chain" id="PRO_0000321706" description="Ribosome maturation factor RimM">
    <location>
        <begin position="1"/>
        <end position="169"/>
    </location>
</feature>
<feature type="domain" description="PRC barrel" evidence="1">
    <location>
        <begin position="96"/>
        <end position="166"/>
    </location>
</feature>
<gene>
    <name evidence="1" type="primary">rimM</name>
    <name type="ordered locus">Acry_2152</name>
</gene>
<proteinExistence type="inferred from homology"/>
<name>RIMM_ACICJ</name>
<evidence type="ECO:0000255" key="1">
    <source>
        <dbReference type="HAMAP-Rule" id="MF_00014"/>
    </source>
</evidence>
<comment type="function">
    <text evidence="1">An accessory protein needed during the final step in the assembly of 30S ribosomal subunit, possibly for assembly of the head region. Essential for efficient processing of 16S rRNA. May be needed both before and after RbfA during the maturation of 16S rRNA. It has affinity for free ribosomal 30S subunits but not for 70S ribosomes.</text>
</comment>
<comment type="subunit">
    <text evidence="1">Binds ribosomal protein uS19.</text>
</comment>
<comment type="subcellular location">
    <subcellularLocation>
        <location evidence="1">Cytoplasm</location>
    </subcellularLocation>
</comment>
<comment type="domain">
    <text evidence="1">The PRC barrel domain binds ribosomal protein uS19.</text>
</comment>
<comment type="similarity">
    <text evidence="1">Belongs to the RimM family.</text>
</comment>
<dbReference type="EMBL" id="CP000697">
    <property type="protein sequence ID" value="ABQ31351.1"/>
    <property type="molecule type" value="Genomic_DNA"/>
</dbReference>
<dbReference type="RefSeq" id="WP_012039845.1">
    <property type="nucleotide sequence ID" value="NC_009484.1"/>
</dbReference>
<dbReference type="SMR" id="A5G0G9"/>
<dbReference type="STRING" id="349163.Acry_2152"/>
<dbReference type="KEGG" id="acr:Acry_2152"/>
<dbReference type="eggNOG" id="COG0806">
    <property type="taxonomic scope" value="Bacteria"/>
</dbReference>
<dbReference type="HOGENOM" id="CLU_077636_0_1_5"/>
<dbReference type="Proteomes" id="UP000000245">
    <property type="component" value="Chromosome"/>
</dbReference>
<dbReference type="GO" id="GO:0005737">
    <property type="term" value="C:cytoplasm"/>
    <property type="evidence" value="ECO:0007669"/>
    <property type="project" value="UniProtKB-SubCell"/>
</dbReference>
<dbReference type="GO" id="GO:0005840">
    <property type="term" value="C:ribosome"/>
    <property type="evidence" value="ECO:0007669"/>
    <property type="project" value="InterPro"/>
</dbReference>
<dbReference type="GO" id="GO:0043022">
    <property type="term" value="F:ribosome binding"/>
    <property type="evidence" value="ECO:0007669"/>
    <property type="project" value="InterPro"/>
</dbReference>
<dbReference type="GO" id="GO:0042274">
    <property type="term" value="P:ribosomal small subunit biogenesis"/>
    <property type="evidence" value="ECO:0007669"/>
    <property type="project" value="UniProtKB-UniRule"/>
</dbReference>
<dbReference type="GO" id="GO:0006364">
    <property type="term" value="P:rRNA processing"/>
    <property type="evidence" value="ECO:0007669"/>
    <property type="project" value="UniProtKB-UniRule"/>
</dbReference>
<dbReference type="Gene3D" id="2.30.30.240">
    <property type="entry name" value="PRC-barrel domain"/>
    <property type="match status" value="1"/>
</dbReference>
<dbReference type="Gene3D" id="2.40.30.60">
    <property type="entry name" value="RimM"/>
    <property type="match status" value="1"/>
</dbReference>
<dbReference type="HAMAP" id="MF_00014">
    <property type="entry name" value="Ribosome_mat_RimM"/>
    <property type="match status" value="1"/>
</dbReference>
<dbReference type="InterPro" id="IPR011033">
    <property type="entry name" value="PRC_barrel-like_sf"/>
</dbReference>
<dbReference type="InterPro" id="IPR056792">
    <property type="entry name" value="PRC_RimM"/>
</dbReference>
<dbReference type="InterPro" id="IPR011961">
    <property type="entry name" value="RimM"/>
</dbReference>
<dbReference type="InterPro" id="IPR036976">
    <property type="entry name" value="RimM_N_sf"/>
</dbReference>
<dbReference type="InterPro" id="IPR009000">
    <property type="entry name" value="Transl_B-barrel_sf"/>
</dbReference>
<dbReference type="NCBIfam" id="TIGR02273">
    <property type="entry name" value="16S_RimM"/>
    <property type="match status" value="1"/>
</dbReference>
<dbReference type="PANTHER" id="PTHR33692">
    <property type="entry name" value="RIBOSOME MATURATION FACTOR RIMM"/>
    <property type="match status" value="1"/>
</dbReference>
<dbReference type="PANTHER" id="PTHR33692:SF1">
    <property type="entry name" value="RIBOSOME MATURATION FACTOR RIMM"/>
    <property type="match status" value="1"/>
</dbReference>
<dbReference type="Pfam" id="PF24986">
    <property type="entry name" value="PRC_RimM"/>
    <property type="match status" value="1"/>
</dbReference>
<dbReference type="SUPFAM" id="SSF50346">
    <property type="entry name" value="PRC-barrel domain"/>
    <property type="match status" value="1"/>
</dbReference>
<dbReference type="SUPFAM" id="SSF50447">
    <property type="entry name" value="Translation proteins"/>
    <property type="match status" value="1"/>
</dbReference>
<accession>A5G0G9</accession>
<keyword id="KW-0143">Chaperone</keyword>
<keyword id="KW-0963">Cytoplasm</keyword>
<keyword id="KW-1185">Reference proteome</keyword>
<keyword id="KW-0690">Ribosome biogenesis</keyword>
<keyword id="KW-0698">rRNA processing</keyword>
<organism>
    <name type="scientific">Acidiphilium cryptum (strain JF-5)</name>
    <dbReference type="NCBI Taxonomy" id="349163"/>
    <lineage>
        <taxon>Bacteria</taxon>
        <taxon>Pseudomonadati</taxon>
        <taxon>Pseudomonadota</taxon>
        <taxon>Alphaproteobacteria</taxon>
        <taxon>Acetobacterales</taxon>
        <taxon>Acidocellaceae</taxon>
        <taxon>Acidiphilium</taxon>
    </lineage>
</organism>
<protein>
    <recommendedName>
        <fullName evidence="1">Ribosome maturation factor RimM</fullName>
    </recommendedName>
</protein>
<reference key="1">
    <citation type="submission" date="2007-05" db="EMBL/GenBank/DDBJ databases">
        <title>Complete sequence of chromosome of Acidiphilium cryptum JF-5.</title>
        <authorList>
            <consortium name="US DOE Joint Genome Institute"/>
            <person name="Copeland A."/>
            <person name="Lucas S."/>
            <person name="Lapidus A."/>
            <person name="Barry K."/>
            <person name="Detter J.C."/>
            <person name="Glavina del Rio T."/>
            <person name="Hammon N."/>
            <person name="Israni S."/>
            <person name="Dalin E."/>
            <person name="Tice H."/>
            <person name="Pitluck S."/>
            <person name="Sims D."/>
            <person name="Brettin T."/>
            <person name="Bruce D."/>
            <person name="Han C."/>
            <person name="Schmutz J."/>
            <person name="Larimer F."/>
            <person name="Land M."/>
            <person name="Hauser L."/>
            <person name="Kyrpides N."/>
            <person name="Kim E."/>
            <person name="Magnuson T."/>
            <person name="Richardson P."/>
        </authorList>
    </citation>
    <scope>NUCLEOTIDE SEQUENCE [LARGE SCALE GENOMIC DNA]</scope>
    <source>
        <strain>JF-5</strain>
    </source>
</reference>
<sequence length="169" mass="17981">MDDRLILMGVIGRPHGVRGAVHVTTYSPDPEGLAELPLRDERGRRVGLAWTGAGIARVTIGEGDEAAAIADRDAAAKLTNLRLYVRRADLPPPEDEDEFYFADLIGLHAVGPDGAALGTIRAVHDFGAGASIELSDGSLLPFTRAVVPEIDLPGGRAVVVRPVEVEMRE</sequence>